<proteinExistence type="inferred from homology"/>
<reference key="1">
    <citation type="journal article" date="2007" name="PLoS Genet.">
        <title>Patterns and implications of gene gain and loss in the evolution of Prochlorococcus.</title>
        <authorList>
            <person name="Kettler G.C."/>
            <person name="Martiny A.C."/>
            <person name="Huang K."/>
            <person name="Zucker J."/>
            <person name="Coleman M.L."/>
            <person name="Rodrigue S."/>
            <person name="Chen F."/>
            <person name="Lapidus A."/>
            <person name="Ferriera S."/>
            <person name="Johnson J."/>
            <person name="Steglich C."/>
            <person name="Church G.M."/>
            <person name="Richardson P."/>
            <person name="Chisholm S.W."/>
        </authorList>
    </citation>
    <scope>NUCLEOTIDE SEQUENCE [LARGE SCALE GENOMIC DNA]</scope>
    <source>
        <strain>MIT 9301</strain>
    </source>
</reference>
<sequence>MSIGILGKKLGMSQLFDEKGNSVPVTLIEAGPCRITQLKTTALDGYTAVQIGYGLSKDKHISKPEKGHLLKSGEELLKHLKEYRVEETSSYEIGNQITVKNFEVGQKVDISGKSMGRGFAGYQKRHGFSRGPMSHGSKNHRAPGSTGAGTTPGRIYPGKRMAGRYGGKQITTKGLLVLKIDDQKNLLVVKGSVPGKPGSIINIKPNNIVGKKGGEKS</sequence>
<keyword id="KW-1185">Reference proteome</keyword>
<keyword id="KW-0687">Ribonucleoprotein</keyword>
<keyword id="KW-0689">Ribosomal protein</keyword>
<keyword id="KW-0694">RNA-binding</keyword>
<keyword id="KW-0699">rRNA-binding</keyword>
<dbReference type="EMBL" id="CP000576">
    <property type="protein sequence ID" value="ABO18372.1"/>
    <property type="molecule type" value="Genomic_DNA"/>
</dbReference>
<dbReference type="RefSeq" id="WP_011863660.1">
    <property type="nucleotide sequence ID" value="NC_009091.1"/>
</dbReference>
<dbReference type="SMR" id="A3PF47"/>
<dbReference type="STRING" id="167546.P9301_17491"/>
<dbReference type="KEGG" id="pmg:P9301_17491"/>
<dbReference type="eggNOG" id="COG0087">
    <property type="taxonomic scope" value="Bacteria"/>
</dbReference>
<dbReference type="HOGENOM" id="CLU_044142_4_1_3"/>
<dbReference type="OrthoDB" id="9806135at2"/>
<dbReference type="Proteomes" id="UP000001430">
    <property type="component" value="Chromosome"/>
</dbReference>
<dbReference type="GO" id="GO:0022625">
    <property type="term" value="C:cytosolic large ribosomal subunit"/>
    <property type="evidence" value="ECO:0007669"/>
    <property type="project" value="TreeGrafter"/>
</dbReference>
<dbReference type="GO" id="GO:0019843">
    <property type="term" value="F:rRNA binding"/>
    <property type="evidence" value="ECO:0007669"/>
    <property type="project" value="UniProtKB-UniRule"/>
</dbReference>
<dbReference type="GO" id="GO:0003735">
    <property type="term" value="F:structural constituent of ribosome"/>
    <property type="evidence" value="ECO:0007669"/>
    <property type="project" value="InterPro"/>
</dbReference>
<dbReference type="GO" id="GO:0006412">
    <property type="term" value="P:translation"/>
    <property type="evidence" value="ECO:0007669"/>
    <property type="project" value="UniProtKB-UniRule"/>
</dbReference>
<dbReference type="FunFam" id="3.30.160.810:FF:000001">
    <property type="entry name" value="50S ribosomal protein L3"/>
    <property type="match status" value="1"/>
</dbReference>
<dbReference type="FunFam" id="2.40.30.10:FF:000065">
    <property type="entry name" value="50S ribosomal protein L3, chloroplastic"/>
    <property type="match status" value="1"/>
</dbReference>
<dbReference type="Gene3D" id="3.30.160.810">
    <property type="match status" value="1"/>
</dbReference>
<dbReference type="Gene3D" id="2.40.30.10">
    <property type="entry name" value="Translation factors"/>
    <property type="match status" value="1"/>
</dbReference>
<dbReference type="HAMAP" id="MF_01325_B">
    <property type="entry name" value="Ribosomal_uL3_B"/>
    <property type="match status" value="1"/>
</dbReference>
<dbReference type="InterPro" id="IPR000597">
    <property type="entry name" value="Ribosomal_uL3"/>
</dbReference>
<dbReference type="InterPro" id="IPR019927">
    <property type="entry name" value="Ribosomal_uL3_bac/org-type"/>
</dbReference>
<dbReference type="InterPro" id="IPR019926">
    <property type="entry name" value="Ribosomal_uL3_CS"/>
</dbReference>
<dbReference type="InterPro" id="IPR009000">
    <property type="entry name" value="Transl_B-barrel_sf"/>
</dbReference>
<dbReference type="NCBIfam" id="TIGR03625">
    <property type="entry name" value="L3_bact"/>
    <property type="match status" value="1"/>
</dbReference>
<dbReference type="PANTHER" id="PTHR11229">
    <property type="entry name" value="50S RIBOSOMAL PROTEIN L3"/>
    <property type="match status" value="1"/>
</dbReference>
<dbReference type="PANTHER" id="PTHR11229:SF16">
    <property type="entry name" value="LARGE RIBOSOMAL SUBUNIT PROTEIN UL3C"/>
    <property type="match status" value="1"/>
</dbReference>
<dbReference type="Pfam" id="PF00297">
    <property type="entry name" value="Ribosomal_L3"/>
    <property type="match status" value="1"/>
</dbReference>
<dbReference type="SUPFAM" id="SSF50447">
    <property type="entry name" value="Translation proteins"/>
    <property type="match status" value="1"/>
</dbReference>
<dbReference type="PROSITE" id="PS00474">
    <property type="entry name" value="RIBOSOMAL_L3"/>
    <property type="match status" value="1"/>
</dbReference>
<accession>A3PF47</accession>
<comment type="function">
    <text evidence="1">One of the primary rRNA binding proteins, it binds directly near the 3'-end of the 23S rRNA, where it nucleates assembly of the 50S subunit.</text>
</comment>
<comment type="subunit">
    <text evidence="1">Part of the 50S ribosomal subunit. Forms a cluster with proteins L14 and L19.</text>
</comment>
<comment type="similarity">
    <text evidence="1">Belongs to the universal ribosomal protein uL3 family.</text>
</comment>
<feature type="chain" id="PRO_1000052106" description="Large ribosomal subunit protein uL3">
    <location>
        <begin position="1"/>
        <end position="217"/>
    </location>
</feature>
<feature type="region of interest" description="Disordered" evidence="2">
    <location>
        <begin position="127"/>
        <end position="162"/>
    </location>
</feature>
<feature type="compositionally biased region" description="Low complexity" evidence="2">
    <location>
        <begin position="142"/>
        <end position="153"/>
    </location>
</feature>
<gene>
    <name evidence="1" type="primary">rplC</name>
    <name evidence="1" type="synonym">rpl3</name>
    <name type="ordered locus">P9301_17491</name>
</gene>
<evidence type="ECO:0000255" key="1">
    <source>
        <dbReference type="HAMAP-Rule" id="MF_01325"/>
    </source>
</evidence>
<evidence type="ECO:0000256" key="2">
    <source>
        <dbReference type="SAM" id="MobiDB-lite"/>
    </source>
</evidence>
<evidence type="ECO:0000305" key="3"/>
<organism>
    <name type="scientific">Prochlorococcus marinus (strain MIT 9301)</name>
    <dbReference type="NCBI Taxonomy" id="167546"/>
    <lineage>
        <taxon>Bacteria</taxon>
        <taxon>Bacillati</taxon>
        <taxon>Cyanobacteriota</taxon>
        <taxon>Cyanophyceae</taxon>
        <taxon>Synechococcales</taxon>
        <taxon>Prochlorococcaceae</taxon>
        <taxon>Prochlorococcus</taxon>
    </lineage>
</organism>
<name>RL3_PROM0</name>
<protein>
    <recommendedName>
        <fullName evidence="1">Large ribosomal subunit protein uL3</fullName>
    </recommendedName>
    <alternativeName>
        <fullName evidence="3">50S ribosomal protein L3</fullName>
    </alternativeName>
</protein>